<gene>
    <name type="ORF">ORF2/4</name>
</gene>
<feature type="chain" id="PRO_0000315341" description="ORF2/4 protein">
    <location>
        <begin position="1"/>
        <end position="275"/>
    </location>
</feature>
<feature type="region of interest" description="Disordered" evidence="1">
    <location>
        <begin position="44"/>
        <end position="103"/>
    </location>
</feature>
<feature type="region of interest" description="Disordered" evidence="1">
    <location>
        <begin position="116"/>
        <end position="207"/>
    </location>
</feature>
<feature type="compositionally biased region" description="Gly residues" evidence="1">
    <location>
        <begin position="79"/>
        <end position="98"/>
    </location>
</feature>
<feature type="compositionally biased region" description="Basic residues" evidence="1">
    <location>
        <begin position="129"/>
        <end position="139"/>
    </location>
</feature>
<feature type="compositionally biased region" description="Low complexity" evidence="1">
    <location>
        <begin position="170"/>
        <end position="188"/>
    </location>
</feature>
<organism>
    <name type="scientific">Torque teno virus (isolate Human/Finland/Hel32/2002)</name>
    <name type="common">TTV</name>
    <name type="synonym">Torque teno virus genotype 6</name>
    <dbReference type="NCBI Taxonomy" id="687342"/>
    <lineage>
        <taxon>Viruses</taxon>
        <taxon>Viruses incertae sedis</taxon>
        <taxon>Anelloviridae</taxon>
        <taxon>Alphatorquevirus</taxon>
        <taxon>Alphatorquevirus homin3</taxon>
    </lineage>
</organism>
<protein>
    <recommendedName>
        <fullName>ORF2/4 protein</fullName>
    </recommendedName>
</protein>
<keyword id="KW-1185">Reference proteome</keyword>
<accession>A7XCC9</accession>
<reference key="1">
    <citation type="journal article" date="2002" name="J. Gen. Virol.">
        <title>Cloning and sequencing of TT virus genotype 6 and expression of antigenic open reading frame 2 proteins.</title>
        <authorList>
            <person name="Kakkola L."/>
            <person name="Hedman K."/>
            <person name="Vanrobaeys H."/>
            <person name="Hedman L."/>
            <person name="Soderlund-Venermo M."/>
        </authorList>
    </citation>
    <scope>NUCLEOTIDE SEQUENCE [GENOMIC DNA]</scope>
</reference>
<reference key="2">
    <citation type="journal article" date="2005" name="J. Virol.">
        <title>Human circovirus TT virus genotype 6 expresses six proteins following transfection of a full-length clone.</title>
        <authorList>
            <person name="Qiu J."/>
            <person name="Kakkola L."/>
            <person name="Cheng F."/>
            <person name="Ye C."/>
            <person name="Soderlund-Venermo M."/>
            <person name="Hedman K."/>
            <person name="Pintel D.J."/>
        </authorList>
    </citation>
    <scope>IDENTIFICATION</scope>
</reference>
<reference key="3">
    <citation type="journal article" date="2007" name="FEBS J.">
        <title>Construction and biological activity of a full-length molecular clone of human Torque teno virus (TTV) genotype 6.</title>
        <authorList>
            <person name="Kakkola L."/>
            <person name="Tommiska J."/>
            <person name="Boele L.C."/>
            <person name="Miettinen S."/>
            <person name="Blom T."/>
            <person name="Kekarainen T."/>
            <person name="Qiu J."/>
            <person name="Pintel D."/>
            <person name="Hoeben R.C."/>
            <person name="Hedman K."/>
            <person name="Soderlund-Venermo M."/>
        </authorList>
    </citation>
    <scope>INFECTIOUS CLONE</scope>
</reference>
<reference key="4">
    <citation type="journal article" date="2007" name="Rev. Med. Virol.">
        <title>Torque teno virus (TTV): current status.</title>
        <authorList>
            <person name="Hino S."/>
            <person name="Miyata H."/>
        </authorList>
    </citation>
    <scope>REVIEW</scope>
</reference>
<evidence type="ECO:0000256" key="1">
    <source>
        <dbReference type="SAM" id="MobiDB-lite"/>
    </source>
</evidence>
<proteinExistence type="predicted"/>
<dbReference type="EMBL" id="AY666122">
    <property type="protein sequence ID" value="ABV25031.1"/>
    <property type="molecule type" value="Genomic_DNA"/>
</dbReference>
<dbReference type="RefSeq" id="YP_003587864.1">
    <property type="nucleotide sequence ID" value="NC_014081.1"/>
</dbReference>
<dbReference type="DNASU" id="9086629"/>
<dbReference type="KEGG" id="vg:9086629"/>
<dbReference type="OrthoDB" id="27134at10239"/>
<dbReference type="Proteomes" id="UP000008257">
    <property type="component" value="Segment"/>
</dbReference>
<dbReference type="InterPro" id="IPR004118">
    <property type="entry name" value="HEV_TT_vir_Orf2/Gyrovir_Vp2_N"/>
</dbReference>
<dbReference type="Pfam" id="PF02957">
    <property type="entry name" value="TT_ORF2-like"/>
    <property type="match status" value="1"/>
</dbReference>
<name>ORF24_TTVV3</name>
<organismHost>
    <name type="scientific">Homo sapiens</name>
    <name type="common">Human</name>
    <dbReference type="NCBI Taxonomy" id="9606"/>
</organismHost>
<sequence>MWQPPTQNGTQLERHWFESVWRSHAAFCSCGDCIGHLQHLATNLGRPPAPQPPRDQHPPHIRGLPALPAPPSNRNSWPGTGGDAAGGEAGGSRGAGDGGDGELADEDLLDAIALAADPQTQTPQERHPGQRKNARKRLRFSSPTQKTPALDPLQSRNKRRRGGDTGGPGTRTTSPAAPAAATPQSPARVHCPRSPQNQEGAQPPPPTIFPCINKVFMFNPPGPKRITGYEAWRDEYETCKAWNRPPRSFYTDIPTYTWMPKAQDQFRVSFKLGFH</sequence>